<feature type="signal peptide" evidence="1">
    <location>
        <begin position="1"/>
        <end position="23"/>
    </location>
</feature>
<feature type="chain" id="PRO_0000355263" description="Snaclec crotocetin-1">
    <location>
        <begin position="24"/>
        <end position="158"/>
    </location>
</feature>
<feature type="domain" description="C-type lectin" evidence="2">
    <location>
        <begin position="34"/>
        <end position="153"/>
    </location>
</feature>
<feature type="disulfide bond" evidence="2">
    <location>
        <begin position="27"/>
        <end position="38"/>
    </location>
</feature>
<feature type="disulfide bond" evidence="2">
    <location>
        <begin position="55"/>
        <end position="152"/>
    </location>
</feature>
<feature type="disulfide bond" description="Interchain" evidence="2">
    <location>
        <position position="104"/>
    </location>
</feature>
<feature type="disulfide bond" evidence="2">
    <location>
        <begin position="127"/>
        <end position="144"/>
    </location>
</feature>
<reference key="1">
    <citation type="submission" date="2002-08" db="EMBL/GenBank/DDBJ databases">
        <authorList>
            <person name="Radis-Baptista G."/>
            <person name="Camargo A.C.M."/>
            <person name="Yamane T."/>
        </authorList>
    </citation>
    <scope>NUCLEOTIDE SEQUENCE [MRNA]</scope>
    <source>
        <tissue>Venom gland</tissue>
    </source>
</reference>
<keyword id="KW-1015">Disulfide bond</keyword>
<keyword id="KW-1199">Hemostasis impairing toxin</keyword>
<keyword id="KW-0964">Secreted</keyword>
<keyword id="KW-0732">Signal</keyword>
<keyword id="KW-0800">Toxin</keyword>
<name>SL1_CRODU</name>
<evidence type="ECO:0000250" key="1"/>
<evidence type="ECO:0000255" key="2">
    <source>
        <dbReference type="PROSITE-ProRule" id="PRU00040"/>
    </source>
</evidence>
<evidence type="ECO:0000305" key="3"/>
<dbReference type="EMBL" id="AF541883">
    <property type="protein sequence ID" value="AAQ11364.1"/>
    <property type="molecule type" value="mRNA"/>
</dbReference>
<dbReference type="SMR" id="Q719L9"/>
<dbReference type="GO" id="GO:0005576">
    <property type="term" value="C:extracellular region"/>
    <property type="evidence" value="ECO:0007669"/>
    <property type="project" value="UniProtKB-SubCell"/>
</dbReference>
<dbReference type="GO" id="GO:0090729">
    <property type="term" value="F:toxin activity"/>
    <property type="evidence" value="ECO:0007669"/>
    <property type="project" value="UniProtKB-KW"/>
</dbReference>
<dbReference type="FunFam" id="3.10.100.10:FF:000087">
    <property type="entry name" value="Snaclec rhodocetin subunit delta"/>
    <property type="match status" value="1"/>
</dbReference>
<dbReference type="Gene3D" id="3.10.100.10">
    <property type="entry name" value="Mannose-Binding Protein A, subunit A"/>
    <property type="match status" value="1"/>
</dbReference>
<dbReference type="InterPro" id="IPR001304">
    <property type="entry name" value="C-type_lectin-like"/>
</dbReference>
<dbReference type="InterPro" id="IPR016186">
    <property type="entry name" value="C-type_lectin-like/link_sf"/>
</dbReference>
<dbReference type="InterPro" id="IPR050111">
    <property type="entry name" value="C-type_lectin/snaclec_domain"/>
</dbReference>
<dbReference type="InterPro" id="IPR018378">
    <property type="entry name" value="C-type_lectin_CS"/>
</dbReference>
<dbReference type="InterPro" id="IPR016187">
    <property type="entry name" value="CTDL_fold"/>
</dbReference>
<dbReference type="PANTHER" id="PTHR22803">
    <property type="entry name" value="MANNOSE, PHOSPHOLIPASE, LECTIN RECEPTOR RELATED"/>
    <property type="match status" value="1"/>
</dbReference>
<dbReference type="Pfam" id="PF00059">
    <property type="entry name" value="Lectin_C"/>
    <property type="match status" value="1"/>
</dbReference>
<dbReference type="PRINTS" id="PR01504">
    <property type="entry name" value="PNCREATITSAP"/>
</dbReference>
<dbReference type="SMART" id="SM00034">
    <property type="entry name" value="CLECT"/>
    <property type="match status" value="1"/>
</dbReference>
<dbReference type="SUPFAM" id="SSF56436">
    <property type="entry name" value="C-type lectin-like"/>
    <property type="match status" value="1"/>
</dbReference>
<dbReference type="PROSITE" id="PS00615">
    <property type="entry name" value="C_TYPE_LECTIN_1"/>
    <property type="match status" value="1"/>
</dbReference>
<dbReference type="PROSITE" id="PS50041">
    <property type="entry name" value="C_TYPE_LECTIN_2"/>
    <property type="match status" value="1"/>
</dbReference>
<protein>
    <recommendedName>
        <fullName>Snaclec crotocetin-1</fullName>
        <shortName>CRC1</shortName>
    </recommendedName>
</protein>
<comment type="function">
    <text evidence="1">Interferes with one step of hemostasis (modulation of platelet aggregation, or coagulation cascade, for example).</text>
</comment>
<comment type="subunit">
    <text evidence="1">Heterodimer; disulfide-linked.</text>
</comment>
<comment type="subcellular location">
    <subcellularLocation>
        <location evidence="1">Secreted</location>
    </subcellularLocation>
</comment>
<comment type="tissue specificity">
    <text>Expressed by the venom gland.</text>
</comment>
<comment type="miscellaneous">
    <text>Shows greater sequence similarity to the alpha than beta subunits compared to other heterodimer snaclecs.</text>
</comment>
<comment type="similarity">
    <text evidence="3">Belongs to the snaclec family.</text>
</comment>
<accession>Q719L9</accession>
<proteinExistence type="evidence at transcript level"/>
<sequence length="158" mass="18199">MGRFIFVSFGLLVVFLSLSGTGADFDCPSGWSAYDQYCYRVIKQLKTWEDAEWFCTKQAKGAHLVSVESAGEADFVAQLVAENIKQNKYYVWIGLRIQNKGQQCSTKWSDGSSVNYENLLKSYSKKCFGLKKETEFLQWYNTDCEEKNLFVCKFPPQR</sequence>
<organism>
    <name type="scientific">Crotalus durissus terrificus</name>
    <name type="common">South American rattlesnake</name>
    <dbReference type="NCBI Taxonomy" id="8732"/>
    <lineage>
        <taxon>Eukaryota</taxon>
        <taxon>Metazoa</taxon>
        <taxon>Chordata</taxon>
        <taxon>Craniata</taxon>
        <taxon>Vertebrata</taxon>
        <taxon>Euteleostomi</taxon>
        <taxon>Lepidosauria</taxon>
        <taxon>Squamata</taxon>
        <taxon>Bifurcata</taxon>
        <taxon>Unidentata</taxon>
        <taxon>Episquamata</taxon>
        <taxon>Toxicofera</taxon>
        <taxon>Serpentes</taxon>
        <taxon>Colubroidea</taxon>
        <taxon>Viperidae</taxon>
        <taxon>Crotalinae</taxon>
        <taxon>Crotalus</taxon>
    </lineage>
</organism>